<gene>
    <name type="primary">pheA</name>
    <name type="ordered locus">Mflv_1145</name>
</gene>
<organism>
    <name type="scientific">Mycolicibacterium gilvum (strain PYR-GCK)</name>
    <name type="common">Mycobacterium gilvum (strain PYR-GCK)</name>
    <dbReference type="NCBI Taxonomy" id="350054"/>
    <lineage>
        <taxon>Bacteria</taxon>
        <taxon>Bacillati</taxon>
        <taxon>Actinomycetota</taxon>
        <taxon>Actinomycetes</taxon>
        <taxon>Mycobacteriales</taxon>
        <taxon>Mycobacteriaceae</taxon>
        <taxon>Mycolicibacterium</taxon>
    </lineage>
</organism>
<name>PHEA_MYCGI</name>
<comment type="catalytic activity">
    <reaction>
        <text>prephenate + H(+) = 3-phenylpyruvate + CO2 + H2O</text>
        <dbReference type="Rhea" id="RHEA:21648"/>
        <dbReference type="ChEBI" id="CHEBI:15377"/>
        <dbReference type="ChEBI" id="CHEBI:15378"/>
        <dbReference type="ChEBI" id="CHEBI:16526"/>
        <dbReference type="ChEBI" id="CHEBI:18005"/>
        <dbReference type="ChEBI" id="CHEBI:29934"/>
        <dbReference type="EC" id="4.2.1.51"/>
    </reaction>
</comment>
<comment type="pathway">
    <text>Amino-acid biosynthesis; L-phenylalanine biosynthesis; phenylpyruvate from prephenate: step 1/1.</text>
</comment>
<comment type="subunit">
    <text evidence="1">Homodimer.</text>
</comment>
<accession>A4T6G3</accession>
<evidence type="ECO:0000250" key="1"/>
<evidence type="ECO:0000255" key="2">
    <source>
        <dbReference type="PROSITE-ProRule" id="PRU00517"/>
    </source>
</evidence>
<evidence type="ECO:0000255" key="3">
    <source>
        <dbReference type="PROSITE-ProRule" id="PRU01007"/>
    </source>
</evidence>
<reference key="1">
    <citation type="submission" date="2007-04" db="EMBL/GenBank/DDBJ databases">
        <title>Complete sequence of chromosome of Mycobacterium gilvum PYR-GCK.</title>
        <authorList>
            <consortium name="US DOE Joint Genome Institute"/>
            <person name="Copeland A."/>
            <person name="Lucas S."/>
            <person name="Lapidus A."/>
            <person name="Barry K."/>
            <person name="Detter J.C."/>
            <person name="Glavina del Rio T."/>
            <person name="Hammon N."/>
            <person name="Israni S."/>
            <person name="Dalin E."/>
            <person name="Tice H."/>
            <person name="Pitluck S."/>
            <person name="Chain P."/>
            <person name="Malfatti S."/>
            <person name="Shin M."/>
            <person name="Vergez L."/>
            <person name="Schmutz J."/>
            <person name="Larimer F."/>
            <person name="Land M."/>
            <person name="Hauser L."/>
            <person name="Kyrpides N."/>
            <person name="Mikhailova N."/>
            <person name="Miller C."/>
            <person name="Richardson P."/>
        </authorList>
    </citation>
    <scope>NUCLEOTIDE SEQUENCE [LARGE SCALE GENOMIC DNA]</scope>
    <source>
        <strain>PYR-GCK</strain>
    </source>
</reference>
<protein>
    <recommendedName>
        <fullName>Prephenate dehydratase</fullName>
        <shortName>PDT</shortName>
        <ecNumber>4.2.1.51</ecNumber>
    </recommendedName>
</protein>
<sequence length="309" mass="32171">MPGIAYLGPEGTFTEAALRALDAQGLIPATQSGAGSVTPLATDSTPAALAAVRAGDADFACVPIENSIDGPVIPTLDSLADGVPLQIYAELTLDVSFTIAVRPGVTAADVRTVAAFPVAAAQVKRWLSENLPNVELVPSNSNAAAARDVADGRAEAAVSTALATERYGLDTLAAGIVDEPNARTRFVLVGCPGPPPKRTGSDRTSVVLRLDNVPGALVTAMNELAIRGIDLTGIESRPTRTELGTYRFYLDFVGHIDDDAVAGALRALHRRCADVRYLGSWPTGETGGAAPPPLDEATAWLQRLREGRP</sequence>
<keyword id="KW-0028">Amino-acid biosynthesis</keyword>
<keyword id="KW-0057">Aromatic amino acid biosynthesis</keyword>
<keyword id="KW-0456">Lyase</keyword>
<keyword id="KW-0584">Phenylalanine biosynthesis</keyword>
<proteinExistence type="inferred from homology"/>
<feature type="chain" id="PRO_0000382034" description="Prephenate dehydratase">
    <location>
        <begin position="1"/>
        <end position="309"/>
    </location>
</feature>
<feature type="domain" description="Prephenate dehydratase" evidence="2">
    <location>
        <begin position="3"/>
        <end position="191"/>
    </location>
</feature>
<feature type="domain" description="ACT" evidence="3">
    <location>
        <begin position="205"/>
        <end position="282"/>
    </location>
</feature>
<feature type="site" description="Essential for activity" evidence="1">
    <location>
        <position position="184"/>
    </location>
</feature>
<dbReference type="EC" id="4.2.1.51"/>
<dbReference type="EMBL" id="CP000656">
    <property type="protein sequence ID" value="ABP43627.1"/>
    <property type="molecule type" value="Genomic_DNA"/>
</dbReference>
<dbReference type="SMR" id="A4T6G3"/>
<dbReference type="STRING" id="350054.Mflv_1145"/>
<dbReference type="KEGG" id="mgi:Mflv_1145"/>
<dbReference type="eggNOG" id="COG0077">
    <property type="taxonomic scope" value="Bacteria"/>
</dbReference>
<dbReference type="HOGENOM" id="CLU_035008_0_0_11"/>
<dbReference type="OrthoDB" id="9802281at2"/>
<dbReference type="UniPathway" id="UPA00121">
    <property type="reaction ID" value="UER00345"/>
</dbReference>
<dbReference type="GO" id="GO:0005737">
    <property type="term" value="C:cytoplasm"/>
    <property type="evidence" value="ECO:0007669"/>
    <property type="project" value="TreeGrafter"/>
</dbReference>
<dbReference type="GO" id="GO:0004664">
    <property type="term" value="F:prephenate dehydratase activity"/>
    <property type="evidence" value="ECO:0007669"/>
    <property type="project" value="UniProtKB-EC"/>
</dbReference>
<dbReference type="GO" id="GO:0042803">
    <property type="term" value="F:protein homodimerization activity"/>
    <property type="evidence" value="ECO:0000250"/>
    <property type="project" value="UniProtKB"/>
</dbReference>
<dbReference type="GO" id="GO:0009094">
    <property type="term" value="P:L-phenylalanine biosynthetic process"/>
    <property type="evidence" value="ECO:0007669"/>
    <property type="project" value="UniProtKB-UniPathway"/>
</dbReference>
<dbReference type="CDD" id="cd04905">
    <property type="entry name" value="ACT_CM-PDT"/>
    <property type="match status" value="1"/>
</dbReference>
<dbReference type="CDD" id="cd13632">
    <property type="entry name" value="PBP2_Aa-PDT_like"/>
    <property type="match status" value="1"/>
</dbReference>
<dbReference type="FunFam" id="3.30.70.260:FF:000012">
    <property type="entry name" value="Prephenate dehydratase"/>
    <property type="match status" value="1"/>
</dbReference>
<dbReference type="FunFam" id="3.40.190.10:FF:000064">
    <property type="entry name" value="Prephenate dehydratase"/>
    <property type="match status" value="1"/>
</dbReference>
<dbReference type="FunFam" id="3.40.190.10:FF:000146">
    <property type="entry name" value="Prephenate dehydratase"/>
    <property type="match status" value="1"/>
</dbReference>
<dbReference type="Gene3D" id="3.30.70.260">
    <property type="match status" value="1"/>
</dbReference>
<dbReference type="Gene3D" id="3.40.190.10">
    <property type="entry name" value="Periplasmic binding protein-like II"/>
    <property type="match status" value="2"/>
</dbReference>
<dbReference type="InterPro" id="IPR045865">
    <property type="entry name" value="ACT-like_dom_sf"/>
</dbReference>
<dbReference type="InterPro" id="IPR002912">
    <property type="entry name" value="ACT_dom"/>
</dbReference>
<dbReference type="InterPro" id="IPR008242">
    <property type="entry name" value="Chor_mutase/pphenate_deHydtase"/>
</dbReference>
<dbReference type="InterPro" id="IPR001086">
    <property type="entry name" value="Preph_deHydtase"/>
</dbReference>
<dbReference type="InterPro" id="IPR018528">
    <property type="entry name" value="Preph_deHydtase_CS"/>
</dbReference>
<dbReference type="NCBIfam" id="NF008865">
    <property type="entry name" value="PRK11898.1"/>
    <property type="match status" value="1"/>
</dbReference>
<dbReference type="PANTHER" id="PTHR21022">
    <property type="entry name" value="PREPHENATE DEHYDRATASE P PROTEIN"/>
    <property type="match status" value="1"/>
</dbReference>
<dbReference type="PANTHER" id="PTHR21022:SF19">
    <property type="entry name" value="PREPHENATE DEHYDRATASE-RELATED"/>
    <property type="match status" value="1"/>
</dbReference>
<dbReference type="Pfam" id="PF01842">
    <property type="entry name" value="ACT"/>
    <property type="match status" value="1"/>
</dbReference>
<dbReference type="Pfam" id="PF00800">
    <property type="entry name" value="PDT"/>
    <property type="match status" value="1"/>
</dbReference>
<dbReference type="PIRSF" id="PIRSF001500">
    <property type="entry name" value="Chor_mut_pdt_Ppr"/>
    <property type="match status" value="1"/>
</dbReference>
<dbReference type="SUPFAM" id="SSF55021">
    <property type="entry name" value="ACT-like"/>
    <property type="match status" value="1"/>
</dbReference>
<dbReference type="SUPFAM" id="SSF53850">
    <property type="entry name" value="Periplasmic binding protein-like II"/>
    <property type="match status" value="1"/>
</dbReference>
<dbReference type="PROSITE" id="PS51671">
    <property type="entry name" value="ACT"/>
    <property type="match status" value="1"/>
</dbReference>
<dbReference type="PROSITE" id="PS00857">
    <property type="entry name" value="PREPHENATE_DEHYDR_1"/>
    <property type="match status" value="1"/>
</dbReference>
<dbReference type="PROSITE" id="PS51171">
    <property type="entry name" value="PREPHENATE_DEHYDR_3"/>
    <property type="match status" value="1"/>
</dbReference>